<feature type="chain" id="PRO_0000396105" description="Putative Rieske 2Fe-2S iron-sulfur protein MSMEG_6410/MSMEI_6242">
    <location>
        <begin position="1"/>
        <end position="518"/>
    </location>
</feature>
<feature type="domain" description="Rieske" evidence="1">
    <location>
        <begin position="431"/>
        <end position="518"/>
    </location>
</feature>
<feature type="binding site" evidence="1">
    <location>
        <position position="471"/>
    </location>
    <ligand>
        <name>[2Fe-2S] cluster</name>
        <dbReference type="ChEBI" id="CHEBI:190135"/>
    </ligand>
</feature>
<feature type="binding site" evidence="1">
    <location>
        <position position="473"/>
    </location>
    <ligand>
        <name>[2Fe-2S] cluster</name>
        <dbReference type="ChEBI" id="CHEBI:190135"/>
    </ligand>
</feature>
<feature type="binding site" evidence="1">
    <location>
        <position position="491"/>
    </location>
    <ligand>
        <name>[2Fe-2S] cluster</name>
        <dbReference type="ChEBI" id="CHEBI:190135"/>
    </ligand>
</feature>
<feature type="binding site" evidence="1">
    <location>
        <position position="494"/>
    </location>
    <ligand>
        <name>[2Fe-2S] cluster</name>
        <dbReference type="ChEBI" id="CHEBI:190135"/>
    </ligand>
</feature>
<feature type="cross-link" description="Isoglutamyl lysine isopeptide (Lys-Gln) (interchain with Q-Cter in protein Pup)" evidence="2">
    <location>
        <position position="375"/>
    </location>
</feature>
<sequence>MQVTSVGHAGFLIESRAGSILCDPWVNPAYFASWFPFPDNSQLDWDALGDVDYLYVSHLHKDHFDPEHLRRYVNKDAVVLLPDYPVPDLRRELEKLGFHNFFETTDSVKHTVSGPKGDLDVMIIALRAPADGPIGDSGLVVSDRVTTVFNMNDARPVDLDVLHTDFGQIDVHMLQYSGAIWYPMVYDMPARAKEAFGIQKRQRQMDRCRQYIAQVGATWVVPSAGPPCFLDPELRDLNDDHGDPANIFPDQMVFLEQLRIHGHDGGLLMIPGSTADFTGSTLNSLTHPVDDPESIFTTGKAAYIEDYAQRMAPVLAAEKARWAPSAGEPMLEALRALFEPIMTQTDQICDGIGYPVELRLTGRDHNETVVLDFPKRVVREPIPDEKFRYGFEIPAALVRTVLRDEEPDWVNTIFLSTRFRAWRVGGYNEYLYTFFKCLTDERIAYADGWFAEAHDDSSSITLDGFQIQRRCPHLKADLSKFGVVEGNTLTCNLHGWQWNLENGRCLTTKGHELRCQKL</sequence>
<protein>
    <recommendedName>
        <fullName>Putative Rieske 2Fe-2S iron-sulfur protein MSMEG_6410/MSMEI_6242</fullName>
        <ecNumber>1.-.-.-</ecNumber>
    </recommendedName>
</protein>
<dbReference type="EC" id="1.-.-.-"/>
<dbReference type="EMBL" id="CP000480">
    <property type="protein sequence ID" value="ABK76191.1"/>
    <property type="molecule type" value="Genomic_DNA"/>
</dbReference>
<dbReference type="EMBL" id="CP001663">
    <property type="protein sequence ID" value="AFP42668.1"/>
    <property type="molecule type" value="Genomic_DNA"/>
</dbReference>
<dbReference type="RefSeq" id="WP_011731268.1">
    <property type="nucleotide sequence ID" value="NZ_SIJM01000013.1"/>
</dbReference>
<dbReference type="RefSeq" id="YP_890623.1">
    <property type="nucleotide sequence ID" value="NC_008596.1"/>
</dbReference>
<dbReference type="SMR" id="A0R635"/>
<dbReference type="STRING" id="246196.MSMEG_6410"/>
<dbReference type="PaxDb" id="246196-MSMEI_6242"/>
<dbReference type="KEGG" id="msb:LJ00_31685"/>
<dbReference type="KEGG" id="msg:MSMEI_6242"/>
<dbReference type="KEGG" id="msm:MSMEG_6410"/>
<dbReference type="PATRIC" id="fig|246196.19.peg.6236"/>
<dbReference type="eggNOG" id="COG2146">
    <property type="taxonomic scope" value="Bacteria"/>
</dbReference>
<dbReference type="eggNOG" id="COG2220">
    <property type="taxonomic scope" value="Bacteria"/>
</dbReference>
<dbReference type="OrthoDB" id="6988582at2"/>
<dbReference type="Proteomes" id="UP000000757">
    <property type="component" value="Chromosome"/>
</dbReference>
<dbReference type="Proteomes" id="UP000006158">
    <property type="component" value="Chromosome"/>
</dbReference>
<dbReference type="GO" id="GO:0005737">
    <property type="term" value="C:cytoplasm"/>
    <property type="evidence" value="ECO:0007669"/>
    <property type="project" value="TreeGrafter"/>
</dbReference>
<dbReference type="GO" id="GO:0051537">
    <property type="term" value="F:2 iron, 2 sulfur cluster binding"/>
    <property type="evidence" value="ECO:0007669"/>
    <property type="project" value="UniProtKB-KW"/>
</dbReference>
<dbReference type="GO" id="GO:0046872">
    <property type="term" value="F:metal ion binding"/>
    <property type="evidence" value="ECO:0007669"/>
    <property type="project" value="UniProtKB-KW"/>
</dbReference>
<dbReference type="GO" id="GO:0004497">
    <property type="term" value="F:monooxygenase activity"/>
    <property type="evidence" value="ECO:0007669"/>
    <property type="project" value="UniProtKB-ARBA"/>
</dbReference>
<dbReference type="GO" id="GO:0016705">
    <property type="term" value="F:oxidoreductase activity, acting on paired donors, with incorporation or reduction of molecular oxygen"/>
    <property type="evidence" value="ECO:0007669"/>
    <property type="project" value="UniProtKB-ARBA"/>
</dbReference>
<dbReference type="Gene3D" id="3.60.15.10">
    <property type="entry name" value="Ribonuclease Z/Hydroxyacylglutathione hydrolase-like"/>
    <property type="match status" value="1"/>
</dbReference>
<dbReference type="Gene3D" id="2.102.10.10">
    <property type="entry name" value="Rieske [2Fe-2S] iron-sulphur domain"/>
    <property type="match status" value="1"/>
</dbReference>
<dbReference type="InterPro" id="IPR036866">
    <property type="entry name" value="RibonucZ/Hydroxyglut_hydro"/>
</dbReference>
<dbReference type="InterPro" id="IPR017941">
    <property type="entry name" value="Rieske_2Fe-2S"/>
</dbReference>
<dbReference type="InterPro" id="IPR036922">
    <property type="entry name" value="Rieske_2Fe-2S_sf"/>
</dbReference>
<dbReference type="PANTHER" id="PTHR15032">
    <property type="entry name" value="N-ACYL-PHOSPHATIDYLETHANOLAMINE-HYDROLYZING PHOSPHOLIPASE D"/>
    <property type="match status" value="1"/>
</dbReference>
<dbReference type="PANTHER" id="PTHR15032:SF4">
    <property type="entry name" value="N-ACYL-PHOSPHATIDYLETHANOLAMINE-HYDROLYZING PHOSPHOLIPASE D"/>
    <property type="match status" value="1"/>
</dbReference>
<dbReference type="Pfam" id="PF13483">
    <property type="entry name" value="Lactamase_B_3"/>
    <property type="match status" value="1"/>
</dbReference>
<dbReference type="Pfam" id="PF00355">
    <property type="entry name" value="Rieske"/>
    <property type="match status" value="1"/>
</dbReference>
<dbReference type="Pfam" id="PF25451">
    <property type="entry name" value="SCP2_Rv3818"/>
    <property type="match status" value="1"/>
</dbReference>
<dbReference type="SUPFAM" id="SSF50022">
    <property type="entry name" value="ISP domain"/>
    <property type="match status" value="1"/>
</dbReference>
<dbReference type="SUPFAM" id="SSF56281">
    <property type="entry name" value="Metallo-hydrolase/oxidoreductase"/>
    <property type="match status" value="1"/>
</dbReference>
<dbReference type="PROSITE" id="PS51296">
    <property type="entry name" value="RIESKE"/>
    <property type="match status" value="1"/>
</dbReference>
<organism>
    <name type="scientific">Mycolicibacterium smegmatis (strain ATCC 700084 / mc(2)155)</name>
    <name type="common">Mycobacterium smegmatis</name>
    <dbReference type="NCBI Taxonomy" id="246196"/>
    <lineage>
        <taxon>Bacteria</taxon>
        <taxon>Bacillati</taxon>
        <taxon>Actinomycetota</taxon>
        <taxon>Actinomycetes</taxon>
        <taxon>Mycobacteriales</taxon>
        <taxon>Mycobacteriaceae</taxon>
        <taxon>Mycolicibacterium</taxon>
    </lineage>
</organism>
<evidence type="ECO:0000255" key="1">
    <source>
        <dbReference type="PROSITE-ProRule" id="PRU00628"/>
    </source>
</evidence>
<evidence type="ECO:0000269" key="2">
    <source>
    </source>
</evidence>
<comment type="cofactor">
    <cofactor evidence="1">
        <name>[2Fe-2S] cluster</name>
        <dbReference type="ChEBI" id="CHEBI:190135"/>
    </cofactor>
    <text evidence="1">Binds 1 [2Fe-2S] cluster per subunit.</text>
</comment>
<proteinExistence type="evidence at protein level"/>
<reference key="1">
    <citation type="submission" date="2006-10" db="EMBL/GenBank/DDBJ databases">
        <authorList>
            <person name="Fleischmann R.D."/>
            <person name="Dodson R.J."/>
            <person name="Haft D.H."/>
            <person name="Merkel J.S."/>
            <person name="Nelson W.C."/>
            <person name="Fraser C.M."/>
        </authorList>
    </citation>
    <scope>NUCLEOTIDE SEQUENCE [LARGE SCALE GENOMIC DNA]</scope>
    <source>
        <strain>ATCC 700084 / mc(2)155</strain>
    </source>
</reference>
<reference key="2">
    <citation type="journal article" date="2007" name="Genome Biol.">
        <title>Interrupted coding sequences in Mycobacterium smegmatis: authentic mutations or sequencing errors?</title>
        <authorList>
            <person name="Deshayes C."/>
            <person name="Perrodou E."/>
            <person name="Gallien S."/>
            <person name="Euphrasie D."/>
            <person name="Schaeffer C."/>
            <person name="Van-Dorsselaer A."/>
            <person name="Poch O."/>
            <person name="Lecompte O."/>
            <person name="Reyrat J.-M."/>
        </authorList>
    </citation>
    <scope>NUCLEOTIDE SEQUENCE [LARGE SCALE GENOMIC DNA]</scope>
    <source>
        <strain>ATCC 700084 / mc(2)155</strain>
    </source>
</reference>
<reference key="3">
    <citation type="journal article" date="2009" name="Genome Res.">
        <title>Ortho-proteogenomics: multiple proteomes investigation through orthology and a new MS-based protocol.</title>
        <authorList>
            <person name="Gallien S."/>
            <person name="Perrodou E."/>
            <person name="Carapito C."/>
            <person name="Deshayes C."/>
            <person name="Reyrat J.-M."/>
            <person name="Van Dorsselaer A."/>
            <person name="Poch O."/>
            <person name="Schaeffer C."/>
            <person name="Lecompte O."/>
        </authorList>
    </citation>
    <scope>NUCLEOTIDE SEQUENCE [LARGE SCALE GENOMIC DNA]</scope>
    <source>
        <strain>ATCC 700084 / mc(2)155</strain>
    </source>
</reference>
<reference key="4">
    <citation type="journal article" date="2010" name="Mol. Biosyst.">
        <title>Expansion of the mycobacterial 'PUPylome'.</title>
        <authorList>
            <person name="Watrous J."/>
            <person name="Burns K."/>
            <person name="Liu W.T."/>
            <person name="Patel A."/>
            <person name="Hook V."/>
            <person name="Bafna V."/>
            <person name="Barry C.E. III"/>
            <person name="Bark S."/>
            <person name="Dorrestein P.C."/>
        </authorList>
    </citation>
    <scope>PUPYLATION AT LYS-375</scope>
    <scope>IDENTIFICATION BY MASS SPECTROMETRY</scope>
</reference>
<gene>
    <name type="ordered locus">MSMEG_6410</name>
    <name type="ordered locus">MSMEI_6242</name>
</gene>
<name>Y6410_MYCS2</name>
<keyword id="KW-0001">2Fe-2S</keyword>
<keyword id="KW-0408">Iron</keyword>
<keyword id="KW-0411">Iron-sulfur</keyword>
<keyword id="KW-1017">Isopeptide bond</keyword>
<keyword id="KW-0479">Metal-binding</keyword>
<keyword id="KW-0560">Oxidoreductase</keyword>
<keyword id="KW-1185">Reference proteome</keyword>
<keyword id="KW-0832">Ubl conjugation</keyword>
<accession>A0R635</accession>
<accession>I7FUS9</accession>